<evidence type="ECO:0000250" key="1"/>
<evidence type="ECO:0000255" key="2"/>
<evidence type="ECO:0000305" key="3"/>
<feature type="chain" id="PRO_0000118564" description="NAD-reducing hydrogenase HoxS subunit alpha">
    <location>
        <begin position="1"/>
        <end position="602"/>
    </location>
</feature>
<feature type="binding site" evidence="1">
    <location>
        <begin position="219"/>
        <end position="228"/>
    </location>
    <ligand>
        <name>NAD(+)</name>
        <dbReference type="ChEBI" id="CHEBI:57540"/>
    </ligand>
</feature>
<feature type="binding site" evidence="1">
    <location>
        <begin position="332"/>
        <end position="379"/>
    </location>
    <ligand>
        <name>FMN</name>
        <dbReference type="ChEBI" id="CHEBI:58210"/>
    </ligand>
</feature>
<feature type="binding site" evidence="2">
    <location>
        <position position="499"/>
    </location>
    <ligand>
        <name>[4Fe-4S] cluster</name>
        <dbReference type="ChEBI" id="CHEBI:49883"/>
    </ligand>
</feature>
<feature type="binding site" evidence="2">
    <location>
        <position position="502"/>
    </location>
    <ligand>
        <name>[4Fe-4S] cluster</name>
        <dbReference type="ChEBI" id="CHEBI:49883"/>
    </ligand>
</feature>
<feature type="binding site" evidence="2">
    <location>
        <position position="505"/>
    </location>
    <ligand>
        <name>[4Fe-4S] cluster</name>
        <dbReference type="ChEBI" id="CHEBI:49883"/>
    </ligand>
</feature>
<feature type="binding site" evidence="2">
    <location>
        <position position="545"/>
    </location>
    <ligand>
        <name>[4Fe-4S] cluster</name>
        <dbReference type="ChEBI" id="CHEBI:49883"/>
    </ligand>
</feature>
<feature type="sequence conflict" description="In Ref. 3; AA sequence." evidence="3" ref="3">
    <original>W</original>
    <variation>G</variation>
    <location>
        <position position="24"/>
    </location>
</feature>
<keyword id="KW-0004">4Fe-4S</keyword>
<keyword id="KW-0963">Cytoplasm</keyword>
<keyword id="KW-0903">Direct protein sequencing</keyword>
<keyword id="KW-0285">Flavoprotein</keyword>
<keyword id="KW-0288">FMN</keyword>
<keyword id="KW-0408">Iron</keyword>
<keyword id="KW-0411">Iron-sulfur</keyword>
<keyword id="KW-0479">Metal-binding</keyword>
<keyword id="KW-0520">NAD</keyword>
<keyword id="KW-0560">Oxidoreductase</keyword>
<keyword id="KW-0614">Plasmid</keyword>
<keyword id="KW-1185">Reference proteome</keyword>
<name>HOXF_CUPNH</name>
<geneLocation type="plasmid">
    <name>megaplasmid pHG1</name>
</geneLocation>
<accession>P22317</accession>
<dbReference type="EC" id="1.12.1.2"/>
<dbReference type="EMBL" id="M55230">
    <property type="protein sequence ID" value="AAC06140.1"/>
    <property type="molecule type" value="Genomic_DNA"/>
</dbReference>
<dbReference type="EMBL" id="AY305378">
    <property type="protein sequence ID" value="AAP85841.1"/>
    <property type="molecule type" value="Genomic_DNA"/>
</dbReference>
<dbReference type="PIR" id="A35385">
    <property type="entry name" value="A35385"/>
</dbReference>
<dbReference type="RefSeq" id="WP_011154010.1">
    <property type="nucleotide sequence ID" value="NC_005241.1"/>
</dbReference>
<dbReference type="SMR" id="P22317"/>
<dbReference type="KEGG" id="reh:PHG088"/>
<dbReference type="PATRIC" id="fig|381666.6.peg.65"/>
<dbReference type="eggNOG" id="COG1894">
    <property type="taxonomic scope" value="Bacteria"/>
</dbReference>
<dbReference type="HOGENOM" id="CLU_014881_3_2_4"/>
<dbReference type="OrthoDB" id="9805533at2"/>
<dbReference type="BioCyc" id="MetaCyc:HOXFALCA-MONOMER"/>
<dbReference type="BRENDA" id="1.12.1.2">
    <property type="organism ID" value="231"/>
</dbReference>
<dbReference type="Proteomes" id="UP000008210">
    <property type="component" value="Plasmid megaplasmid pHG1"/>
</dbReference>
<dbReference type="GO" id="GO:0005737">
    <property type="term" value="C:cytoplasm"/>
    <property type="evidence" value="ECO:0007669"/>
    <property type="project" value="UniProtKB-SubCell"/>
</dbReference>
<dbReference type="GO" id="GO:0051539">
    <property type="term" value="F:4 iron, 4 sulfur cluster binding"/>
    <property type="evidence" value="ECO:0007669"/>
    <property type="project" value="UniProtKB-KW"/>
</dbReference>
<dbReference type="GO" id="GO:0010181">
    <property type="term" value="F:FMN binding"/>
    <property type="evidence" value="ECO:0007669"/>
    <property type="project" value="InterPro"/>
</dbReference>
<dbReference type="GO" id="GO:0047985">
    <property type="term" value="F:hydrogen dehydrogenase activity"/>
    <property type="evidence" value="ECO:0007669"/>
    <property type="project" value="UniProtKB-EC"/>
</dbReference>
<dbReference type="GO" id="GO:0046872">
    <property type="term" value="F:metal ion binding"/>
    <property type="evidence" value="ECO:0007669"/>
    <property type="project" value="UniProtKB-KW"/>
</dbReference>
<dbReference type="GO" id="GO:0008137">
    <property type="term" value="F:NADH dehydrogenase (ubiquinone) activity"/>
    <property type="evidence" value="ECO:0007669"/>
    <property type="project" value="InterPro"/>
</dbReference>
<dbReference type="CDD" id="cd03083">
    <property type="entry name" value="TRX_Fd_NuoE_hoxF"/>
    <property type="match status" value="1"/>
</dbReference>
<dbReference type="FunFam" id="3.40.50.11540:FF:000001">
    <property type="entry name" value="NADH dehydrogenase [ubiquinone] flavoprotein 1, mitochondrial"/>
    <property type="match status" value="1"/>
</dbReference>
<dbReference type="Gene3D" id="3.10.20.600">
    <property type="match status" value="1"/>
</dbReference>
<dbReference type="Gene3D" id="3.40.30.10">
    <property type="entry name" value="Glutaredoxin"/>
    <property type="match status" value="1"/>
</dbReference>
<dbReference type="Gene3D" id="1.10.10.1590">
    <property type="entry name" value="NADH-quinone oxidoreductase subunit E"/>
    <property type="match status" value="1"/>
</dbReference>
<dbReference type="Gene3D" id="3.40.50.11540">
    <property type="entry name" value="NADH-ubiquinone oxidoreductase 51kDa subunit"/>
    <property type="match status" value="1"/>
</dbReference>
<dbReference type="Gene3D" id="1.20.1440.230">
    <property type="entry name" value="NADH-ubiquinone oxidoreductase 51kDa subunit, iron-sulphur binding domain"/>
    <property type="match status" value="1"/>
</dbReference>
<dbReference type="InterPro" id="IPR001949">
    <property type="entry name" value="NADH-UbQ_OxRdtase_51kDa_CS"/>
</dbReference>
<dbReference type="InterPro" id="IPR011538">
    <property type="entry name" value="Nuo51_FMN-bd"/>
</dbReference>
<dbReference type="InterPro" id="IPR037225">
    <property type="entry name" value="Nuo51_FMN-bd_sf"/>
</dbReference>
<dbReference type="InterPro" id="IPR041921">
    <property type="entry name" value="NuoE_N"/>
</dbReference>
<dbReference type="InterPro" id="IPR019575">
    <property type="entry name" value="Nuop51_4Fe4S-bd"/>
</dbReference>
<dbReference type="InterPro" id="IPR037207">
    <property type="entry name" value="Nuop51_4Fe4S-bd_sf"/>
</dbReference>
<dbReference type="InterPro" id="IPR036249">
    <property type="entry name" value="Thioredoxin-like_sf"/>
</dbReference>
<dbReference type="PANTHER" id="PTHR43578">
    <property type="entry name" value="NADH-QUINONE OXIDOREDUCTASE SUBUNIT F"/>
    <property type="match status" value="1"/>
</dbReference>
<dbReference type="PANTHER" id="PTHR43578:SF3">
    <property type="entry name" value="NADH-QUINONE OXIDOREDUCTASE SUBUNIT F"/>
    <property type="match status" value="1"/>
</dbReference>
<dbReference type="Pfam" id="PF01257">
    <property type="entry name" value="2Fe-2S_thioredx"/>
    <property type="match status" value="1"/>
</dbReference>
<dbReference type="Pfam" id="PF01512">
    <property type="entry name" value="Complex1_51K"/>
    <property type="match status" value="1"/>
</dbReference>
<dbReference type="Pfam" id="PF10589">
    <property type="entry name" value="NADH_4Fe-4S"/>
    <property type="match status" value="1"/>
</dbReference>
<dbReference type="SMART" id="SM00928">
    <property type="entry name" value="NADH_4Fe-4S"/>
    <property type="match status" value="1"/>
</dbReference>
<dbReference type="SUPFAM" id="SSF142019">
    <property type="entry name" value="Nqo1 FMN-binding domain-like"/>
    <property type="match status" value="1"/>
</dbReference>
<dbReference type="SUPFAM" id="SSF142984">
    <property type="entry name" value="Nqo1 middle domain-like"/>
    <property type="match status" value="1"/>
</dbReference>
<dbReference type="SUPFAM" id="SSF140490">
    <property type="entry name" value="Nqo1C-terminal domain-like"/>
    <property type="match status" value="1"/>
</dbReference>
<dbReference type="SUPFAM" id="SSF52833">
    <property type="entry name" value="Thioredoxin-like"/>
    <property type="match status" value="1"/>
</dbReference>
<dbReference type="PROSITE" id="PS00644">
    <property type="entry name" value="COMPLEX1_51K_1"/>
    <property type="match status" value="1"/>
</dbReference>
<dbReference type="PROSITE" id="PS00645">
    <property type="entry name" value="COMPLEX1_51K_2"/>
    <property type="match status" value="1"/>
</dbReference>
<reference key="1">
    <citation type="journal article" date="1990" name="J. Bacteriol.">
        <title>Cloning and nucleotide sequences of the genes for the subunits of NAD-reducing hydrogenase of Alcaligenes eutrophus H16.</title>
        <authorList>
            <person name="Tran-Betcke A."/>
            <person name="Warnecke U."/>
            <person name="Boecker C."/>
            <person name="Zaborosch C."/>
            <person name="Friedrich B."/>
        </authorList>
    </citation>
    <scope>NUCLEOTIDE SEQUENCE [GENOMIC DNA]</scope>
</reference>
<reference key="2">
    <citation type="journal article" date="2003" name="J. Mol. Biol.">
        <title>Complete nucleotide sequence of pHG1: a Ralstonia eutropha H16 megaplasmid encoding key enzymes of H(2)-based lithoautotrophy and anaerobiosis.</title>
        <authorList>
            <person name="Schwartz E."/>
            <person name="Henne A."/>
            <person name="Cramm R."/>
            <person name="Eitinger T."/>
            <person name="Friedrich B."/>
            <person name="Gottschalk G."/>
        </authorList>
    </citation>
    <scope>NUCLEOTIDE SEQUENCE [LARGE SCALE GENOMIC DNA]</scope>
    <source>
        <strain>ATCC 17699 / DSM 428 / KCTC 22496 / NCIMB 10442 / H16 / Stanier 337</strain>
    </source>
</reference>
<reference key="3">
    <citation type="journal article" date="1989" name="Eur. J. Biochem.">
        <title>Comparison of the NH2-terminal amino acid sequences of the four non-identical subunits of the NAD-linked hydrogenases from Nocardia opaca 1b and Alcaligenes eutrophus H16.</title>
        <authorList>
            <person name="Zaborosch C."/>
            <person name="Schneider K."/>
            <person name="Schlegel H.G."/>
            <person name="Kratzin H."/>
        </authorList>
    </citation>
    <scope>PROTEIN SEQUENCE OF 1-27</scope>
</reference>
<sequence length="602" mass="66784">MDSRITTILERYRSDRTRLIDILWDVQHEYGHIPDAVLPQLGAGLKLSPLDIRETASFYHFFLDKPSGKYRIYLCNSVIAKINGYQAVREALERETGIRFGETDPNGMFGLFDTPCIGLSDQEPAMLIDKVVFTRLRPGKITDIIAQLKQGRSPAEIANPAGLPSQDIAYVDAMVESNVRTKGPVFFRGRTDLRSLLDQCLLLKPEQVIETIVDSRLRGRGGAGFSTGLKWRLCRDAESEQKYVICNADEGEPGTFKDRVLLTRAPKKVFVGMVIAAYAIGCRKGIVYLRGEYFYLKDYLERQLQELREDGLLGRAIGGRAGFDFDIRIQMGAGAYICGDESALIESCEGKRGTPRVKPPFPVQQGYLGKPTSVNNVETFAAVSRIMEEGADWFRAMGTPDSAGTRLLSVAGDCSKPGIYEVEWGVTLNEVLAMVGARDARAVQISGPSGECVSVAKDGERKLAYEDLSCNGAFTIFNCKRDLLEIVRDHMQFFVEESCGICVPCRAGNVDLHRKVEWVIAGKACQKDLDDMVSWGALVRRTSRCGLGATSPKPILTTLEKFPEIYQNKLVRHEGPLLPSFDLDTALGGYEKALKDLEEVTR</sequence>
<protein>
    <recommendedName>
        <fullName>NAD-reducing hydrogenase HoxS subunit alpha</fullName>
        <ecNumber>1.12.1.2</ecNumber>
    </recommendedName>
</protein>
<gene>
    <name type="primary">hoxF</name>
    <name type="ordered locus">PHG088</name>
</gene>
<organism>
    <name type="scientific">Cupriavidus necator (strain ATCC 17699 / DSM 428 / KCTC 22496 / NCIMB 10442 / H16 / Stanier 337)</name>
    <name type="common">Ralstonia eutropha</name>
    <dbReference type="NCBI Taxonomy" id="381666"/>
    <lineage>
        <taxon>Bacteria</taxon>
        <taxon>Pseudomonadati</taxon>
        <taxon>Pseudomonadota</taxon>
        <taxon>Betaproteobacteria</taxon>
        <taxon>Burkholderiales</taxon>
        <taxon>Burkholderiaceae</taxon>
        <taxon>Cupriavidus</taxon>
    </lineage>
</organism>
<comment type="function">
    <text>Subunits alpha and gamma of HoxS constitute an NADH--oxidoreductase.</text>
</comment>
<comment type="catalytic activity">
    <reaction>
        <text>H2 + NAD(+) = NADH + H(+)</text>
        <dbReference type="Rhea" id="RHEA:24636"/>
        <dbReference type="ChEBI" id="CHEBI:15378"/>
        <dbReference type="ChEBI" id="CHEBI:18276"/>
        <dbReference type="ChEBI" id="CHEBI:57540"/>
        <dbReference type="ChEBI" id="CHEBI:57945"/>
        <dbReference type="EC" id="1.12.1.2"/>
    </reaction>
</comment>
<comment type="cofactor">
    <cofactor evidence="3">
        <name>FMN</name>
        <dbReference type="ChEBI" id="CHEBI:58210"/>
    </cofactor>
    <text evidence="3">Binds 1 FMN.</text>
</comment>
<comment type="cofactor">
    <cofactor evidence="3">
        <name>[4Fe-4S] cluster</name>
        <dbReference type="ChEBI" id="CHEBI:49883"/>
    </cofactor>
    <text evidence="3">Binds 1 [4Fe-4S] cluster.</text>
</comment>
<comment type="subunit">
    <text>Tetramer of an alpha and a gamma subunits (flavin-containing dimer), and a delta and a nickel-containing beta subunit (hydrogenase dimer).</text>
</comment>
<comment type="subcellular location">
    <subcellularLocation>
        <location>Cytoplasm</location>
    </subcellularLocation>
</comment>
<comment type="similarity">
    <text evidence="3">Belongs to the complex I 51 kDa subunit family.</text>
</comment>
<proteinExistence type="evidence at protein level"/>